<protein>
    <recommendedName>
        <fullName evidence="1">Large ribosomal subunit protein uL22</fullName>
    </recommendedName>
    <alternativeName>
        <fullName evidence="2">50S ribosomal protein L22</fullName>
    </alternativeName>
</protein>
<organism>
    <name type="scientific">Brucella suis (strain ATCC 23445 / NCTC 10510)</name>
    <dbReference type="NCBI Taxonomy" id="470137"/>
    <lineage>
        <taxon>Bacteria</taxon>
        <taxon>Pseudomonadati</taxon>
        <taxon>Pseudomonadota</taxon>
        <taxon>Alphaproteobacteria</taxon>
        <taxon>Hyphomicrobiales</taxon>
        <taxon>Brucellaceae</taxon>
        <taxon>Brucella/Ochrobactrum group</taxon>
        <taxon>Brucella</taxon>
    </lineage>
</organism>
<evidence type="ECO:0000255" key="1">
    <source>
        <dbReference type="HAMAP-Rule" id="MF_01331"/>
    </source>
</evidence>
<evidence type="ECO:0000305" key="2"/>
<comment type="function">
    <text evidence="1">This protein binds specifically to 23S rRNA; its binding is stimulated by other ribosomal proteins, e.g. L4, L17, and L20. It is important during the early stages of 50S assembly. It makes multiple contacts with different domains of the 23S rRNA in the assembled 50S subunit and ribosome (By similarity).</text>
</comment>
<comment type="function">
    <text evidence="1">The globular domain of the protein is located near the polypeptide exit tunnel on the outside of the subunit, while an extended beta-hairpin is found that lines the wall of the exit tunnel in the center of the 70S ribosome.</text>
</comment>
<comment type="subunit">
    <text evidence="1">Part of the 50S ribosomal subunit.</text>
</comment>
<comment type="similarity">
    <text evidence="1">Belongs to the universal ribosomal protein uL22 family.</text>
</comment>
<dbReference type="EMBL" id="CP000911">
    <property type="protein sequence ID" value="ABY38328.1"/>
    <property type="molecule type" value="Genomic_DNA"/>
</dbReference>
<dbReference type="RefSeq" id="WP_004690916.1">
    <property type="nucleotide sequence ID" value="NC_010169.1"/>
</dbReference>
<dbReference type="SMR" id="B0CH27"/>
<dbReference type="KEGG" id="bmt:BSUIS_A1277"/>
<dbReference type="HOGENOM" id="CLU_083987_3_0_5"/>
<dbReference type="Proteomes" id="UP000008545">
    <property type="component" value="Chromosome I"/>
</dbReference>
<dbReference type="GO" id="GO:0022625">
    <property type="term" value="C:cytosolic large ribosomal subunit"/>
    <property type="evidence" value="ECO:0007669"/>
    <property type="project" value="TreeGrafter"/>
</dbReference>
<dbReference type="GO" id="GO:0019843">
    <property type="term" value="F:rRNA binding"/>
    <property type="evidence" value="ECO:0007669"/>
    <property type="project" value="UniProtKB-UniRule"/>
</dbReference>
<dbReference type="GO" id="GO:0003735">
    <property type="term" value="F:structural constituent of ribosome"/>
    <property type="evidence" value="ECO:0007669"/>
    <property type="project" value="InterPro"/>
</dbReference>
<dbReference type="GO" id="GO:0006412">
    <property type="term" value="P:translation"/>
    <property type="evidence" value="ECO:0007669"/>
    <property type="project" value="UniProtKB-UniRule"/>
</dbReference>
<dbReference type="CDD" id="cd00336">
    <property type="entry name" value="Ribosomal_L22"/>
    <property type="match status" value="1"/>
</dbReference>
<dbReference type="Gene3D" id="3.90.470.10">
    <property type="entry name" value="Ribosomal protein L22/L17"/>
    <property type="match status" value="1"/>
</dbReference>
<dbReference type="HAMAP" id="MF_01331_B">
    <property type="entry name" value="Ribosomal_uL22_B"/>
    <property type="match status" value="1"/>
</dbReference>
<dbReference type="InterPro" id="IPR001063">
    <property type="entry name" value="Ribosomal_uL22"/>
</dbReference>
<dbReference type="InterPro" id="IPR005727">
    <property type="entry name" value="Ribosomal_uL22_bac/chlpt-type"/>
</dbReference>
<dbReference type="InterPro" id="IPR047867">
    <property type="entry name" value="Ribosomal_uL22_bac/org-type"/>
</dbReference>
<dbReference type="InterPro" id="IPR036394">
    <property type="entry name" value="Ribosomal_uL22_sf"/>
</dbReference>
<dbReference type="NCBIfam" id="TIGR01044">
    <property type="entry name" value="rplV_bact"/>
    <property type="match status" value="1"/>
</dbReference>
<dbReference type="PANTHER" id="PTHR13501">
    <property type="entry name" value="CHLOROPLAST 50S RIBOSOMAL PROTEIN L22-RELATED"/>
    <property type="match status" value="1"/>
</dbReference>
<dbReference type="PANTHER" id="PTHR13501:SF8">
    <property type="entry name" value="LARGE RIBOSOMAL SUBUNIT PROTEIN UL22M"/>
    <property type="match status" value="1"/>
</dbReference>
<dbReference type="Pfam" id="PF00237">
    <property type="entry name" value="Ribosomal_L22"/>
    <property type="match status" value="1"/>
</dbReference>
<dbReference type="SUPFAM" id="SSF54843">
    <property type="entry name" value="Ribosomal protein L22"/>
    <property type="match status" value="1"/>
</dbReference>
<accession>B0CH27</accession>
<reference key="1">
    <citation type="submission" date="2007-12" db="EMBL/GenBank/DDBJ databases">
        <title>Brucella suis ATCC 23445 whole genome shotgun sequencing project.</title>
        <authorList>
            <person name="Setubal J.C."/>
            <person name="Bowns C."/>
            <person name="Boyle S."/>
            <person name="Crasta O.R."/>
            <person name="Czar M.J."/>
            <person name="Dharmanolla C."/>
            <person name="Gillespie J.J."/>
            <person name="Kenyon R.W."/>
            <person name="Lu J."/>
            <person name="Mane S."/>
            <person name="Mohapatra S."/>
            <person name="Nagrani S."/>
            <person name="Purkayastha A."/>
            <person name="Rajasimha H.K."/>
            <person name="Shallom J.M."/>
            <person name="Shallom S."/>
            <person name="Shukla M."/>
            <person name="Snyder E.E."/>
            <person name="Sobral B.W."/>
            <person name="Wattam A.R."/>
            <person name="Will R."/>
            <person name="Williams K."/>
            <person name="Yoo H."/>
            <person name="Bruce D."/>
            <person name="Detter C."/>
            <person name="Munk C."/>
            <person name="Brettin T.S."/>
        </authorList>
    </citation>
    <scope>NUCLEOTIDE SEQUENCE [LARGE SCALE GENOMIC DNA]</scope>
    <source>
        <strain>ATCC 23445 / NCTC 10510</strain>
    </source>
</reference>
<sequence length="127" mass="13872">MGKAKAPRQLKDNEAKAVARTLRVSPQKLNLVASMIRGKKVNAALADLTFSRKRIAGTVKKTLESAIANAENNHDLDVDALIVAEAYVGKSIVMKRFHVRGRASRIEKPFSHLTIVVREVAEKGEAA</sequence>
<keyword id="KW-0687">Ribonucleoprotein</keyword>
<keyword id="KW-0689">Ribosomal protein</keyword>
<keyword id="KW-0694">RNA-binding</keyword>
<keyword id="KW-0699">rRNA-binding</keyword>
<name>RL22_BRUSI</name>
<proteinExistence type="inferred from homology"/>
<feature type="chain" id="PRO_0000354449" description="Large ribosomal subunit protein uL22">
    <location>
        <begin position="1"/>
        <end position="127"/>
    </location>
</feature>
<gene>
    <name evidence="1" type="primary">rplV</name>
    <name type="ordered locus">BSUIS_A1277</name>
</gene>